<organism>
    <name type="scientific">Triticum aestivum</name>
    <name type="common">Wheat</name>
    <dbReference type="NCBI Taxonomy" id="4565"/>
    <lineage>
        <taxon>Eukaryota</taxon>
        <taxon>Viridiplantae</taxon>
        <taxon>Streptophyta</taxon>
        <taxon>Embryophyta</taxon>
        <taxon>Tracheophyta</taxon>
        <taxon>Spermatophyta</taxon>
        <taxon>Magnoliopsida</taxon>
        <taxon>Liliopsida</taxon>
        <taxon>Poales</taxon>
        <taxon>Poaceae</taxon>
        <taxon>BOP clade</taxon>
        <taxon>Pooideae</taxon>
        <taxon>Triticodae</taxon>
        <taxon>Triticeae</taxon>
        <taxon>Triticinae</taxon>
        <taxon>Triticum</taxon>
    </lineage>
</organism>
<keyword id="KW-0150">Chloroplast</keyword>
<keyword id="KW-0903">Direct protein sequencing</keyword>
<keyword id="KW-0472">Membrane</keyword>
<keyword id="KW-0602">Photosynthesis</keyword>
<keyword id="KW-0604">Photosystem II</keyword>
<keyword id="KW-0934">Plastid</keyword>
<keyword id="KW-1185">Reference proteome</keyword>
<keyword id="KW-0793">Thylakoid</keyword>
<feature type="chain" id="PRO_0000217285" description="Photosystem II reaction center W protein">
    <location>
        <begin position="1"/>
        <end position="20" status="greater than"/>
    </location>
</feature>
<feature type="region of interest" description="Disordered" evidence="4">
    <location>
        <begin position="1"/>
        <end position="20"/>
    </location>
</feature>
<feature type="compositionally biased region" description="Polar residues" evidence="4">
    <location>
        <begin position="8"/>
        <end position="20"/>
    </location>
</feature>
<feature type="non-terminal residue">
    <location>
        <position position="20"/>
    </location>
</feature>
<name>PSBW_WHEAT</name>
<reference key="1">
    <citation type="journal article" date="1989" name="FEBS Lett.">
        <title>N-terminal sequencing of photosystem II low-molecular-mass proteins. 5 and 4.1 kDa components of the O2-evolving core complex from higher plants.</title>
        <authorList>
            <person name="Ikeuchi M."/>
            <person name="Takio K."/>
            <person name="Inoue Y."/>
        </authorList>
    </citation>
    <scope>PROTEIN SEQUENCE</scope>
    <scope>SUBUNIT</scope>
    <scope>SUBCELLULAR LOCATION</scope>
</reference>
<proteinExistence type="evidence at protein level"/>
<protein>
    <recommendedName>
        <fullName>Photosystem II reaction center W protein</fullName>
    </recommendedName>
    <alternativeName>
        <fullName>PSII 6.1 kDa protein</fullName>
    </alternativeName>
</protein>
<accession>P55967</accession>
<gene>
    <name type="primary">psbW</name>
</gene>
<dbReference type="STRING" id="4565.P55967"/>
<dbReference type="PaxDb" id="4565-Traes_1AL_B5CB664F1.2"/>
<dbReference type="eggNOG" id="ENOG502S50E">
    <property type="taxonomic scope" value="Eukaryota"/>
</dbReference>
<dbReference type="Proteomes" id="UP000019116">
    <property type="component" value="Unplaced"/>
</dbReference>
<dbReference type="GO" id="GO:0009535">
    <property type="term" value="C:chloroplast thylakoid membrane"/>
    <property type="evidence" value="ECO:0007669"/>
    <property type="project" value="UniProtKB-SubCell"/>
</dbReference>
<dbReference type="GO" id="GO:0009523">
    <property type="term" value="C:photosystem II"/>
    <property type="evidence" value="ECO:0007669"/>
    <property type="project" value="UniProtKB-KW"/>
</dbReference>
<dbReference type="GO" id="GO:0015979">
    <property type="term" value="P:photosynthesis"/>
    <property type="evidence" value="ECO:0007669"/>
    <property type="project" value="UniProtKB-KW"/>
</dbReference>
<dbReference type="InterPro" id="IPR009806">
    <property type="entry name" value="PSII_PsbW_class2"/>
</dbReference>
<dbReference type="Pfam" id="PF07123">
    <property type="entry name" value="PsbW"/>
    <property type="match status" value="1"/>
</dbReference>
<sequence>LVDERMSTEGTGLSLGLSNN</sequence>
<evidence type="ECO:0000250" key="1"/>
<evidence type="ECO:0000250" key="2">
    <source>
        <dbReference type="UniProtKB" id="Q39194"/>
    </source>
</evidence>
<evidence type="ECO:0000250" key="3">
    <source>
        <dbReference type="UniProtKB" id="Q41387"/>
    </source>
</evidence>
<evidence type="ECO:0000256" key="4">
    <source>
        <dbReference type="SAM" id="MobiDB-lite"/>
    </source>
</evidence>
<evidence type="ECO:0000269" key="5">
    <source>
    </source>
</evidence>
<evidence type="ECO:0000305" key="6"/>
<comment type="function">
    <text evidence="2">Stabilizes dimeric photosystem II (PSII). In its absence no dimeric PSII accumulates and there is a reduction of monomeric PSII (By similarity).</text>
</comment>
<comment type="subunit">
    <text evidence="3 5">Part of the photosystem II complex. PSII is composed of 1 copy each of membrane proteins PsbA, PsbB, PsbC, PsbD, numerous small proteins, at least 3 peripheral proteins of the oxygen-evolving complex and a large number of cofactors. It forms dimeric complexes.</text>
</comment>
<comment type="subcellular location">
    <subcellularLocation>
        <location evidence="5">Plastid</location>
        <location evidence="5">Chloroplast thylakoid membrane</location>
        <topology evidence="1">Single-pass membrane protein</topology>
    </subcellularLocation>
    <text evidence="3">The N-terminus is found within the thylakoid lumen (By similarity).</text>
</comment>
<comment type="similarity">
    <text evidence="6">Belongs to the psbW family.</text>
</comment>